<keyword id="KW-0103">Bromodomain</keyword>
<keyword id="KW-0539">Nucleus</keyword>
<keyword id="KW-1185">Reference proteome</keyword>
<keyword id="KW-0804">Transcription</keyword>
<keyword id="KW-0805">Transcription regulation</keyword>
<reference key="1">
    <citation type="submission" date="1999-04" db="EMBL/GenBank/DDBJ databases">
        <title>Structural analysis of Arabidopsis thaliana chromosome 5. XI.</title>
        <authorList>
            <person name="Kaneko T."/>
            <person name="Katoh T."/>
            <person name="Asamizu E."/>
            <person name="Sato S."/>
            <person name="Nakamura Y."/>
            <person name="Kotani H."/>
            <person name="Tabata S."/>
        </authorList>
    </citation>
    <scope>NUCLEOTIDE SEQUENCE [LARGE SCALE GENOMIC DNA]</scope>
    <source>
        <strain>cv. Columbia</strain>
    </source>
</reference>
<reference key="2">
    <citation type="journal article" date="2017" name="Plant J.">
        <title>Araport11: a complete reannotation of the Arabidopsis thaliana reference genome.</title>
        <authorList>
            <person name="Cheng C.Y."/>
            <person name="Krishnakumar V."/>
            <person name="Chan A.P."/>
            <person name="Thibaud-Nissen F."/>
            <person name="Schobel S."/>
            <person name="Town C.D."/>
        </authorList>
    </citation>
    <scope>GENOME REANNOTATION</scope>
    <source>
        <strain>cv. Columbia</strain>
    </source>
</reference>
<reference key="3">
    <citation type="journal article" date="2003" name="Science">
        <title>Empirical analysis of transcriptional activity in the Arabidopsis genome.</title>
        <authorList>
            <person name="Yamada K."/>
            <person name="Lim J."/>
            <person name="Dale J.M."/>
            <person name="Chen H."/>
            <person name="Shinn P."/>
            <person name="Palm C.J."/>
            <person name="Southwick A.M."/>
            <person name="Wu H.C."/>
            <person name="Kim C.J."/>
            <person name="Nguyen M."/>
            <person name="Pham P.K."/>
            <person name="Cheuk R.F."/>
            <person name="Karlin-Newmann G."/>
            <person name="Liu S.X."/>
            <person name="Lam B."/>
            <person name="Sakano H."/>
            <person name="Wu T."/>
            <person name="Yu G."/>
            <person name="Miranda M."/>
            <person name="Quach H.L."/>
            <person name="Tripp M."/>
            <person name="Chang C.H."/>
            <person name="Lee J.M."/>
            <person name="Toriumi M.J."/>
            <person name="Chan M.M."/>
            <person name="Tang C.C."/>
            <person name="Onodera C.S."/>
            <person name="Deng J.M."/>
            <person name="Akiyama K."/>
            <person name="Ansari Y."/>
            <person name="Arakawa T."/>
            <person name="Banh J."/>
            <person name="Banno F."/>
            <person name="Bowser L."/>
            <person name="Brooks S.Y."/>
            <person name="Carninci P."/>
            <person name="Chao Q."/>
            <person name="Choy N."/>
            <person name="Enju A."/>
            <person name="Goldsmith A.D."/>
            <person name="Gurjal M."/>
            <person name="Hansen N.F."/>
            <person name="Hayashizaki Y."/>
            <person name="Johnson-Hopson C."/>
            <person name="Hsuan V.W."/>
            <person name="Iida K."/>
            <person name="Karnes M."/>
            <person name="Khan S."/>
            <person name="Koesema E."/>
            <person name="Ishida J."/>
            <person name="Jiang P.X."/>
            <person name="Jones T."/>
            <person name="Kawai J."/>
            <person name="Kamiya A."/>
            <person name="Meyers C."/>
            <person name="Nakajima M."/>
            <person name="Narusaka M."/>
            <person name="Seki M."/>
            <person name="Sakurai T."/>
            <person name="Satou M."/>
            <person name="Tamse R."/>
            <person name="Vaysberg M."/>
            <person name="Wallender E.K."/>
            <person name="Wong C."/>
            <person name="Yamamura Y."/>
            <person name="Yuan S."/>
            <person name="Shinozaki K."/>
            <person name="Davis R.W."/>
            <person name="Theologis A."/>
            <person name="Ecker J.R."/>
        </authorList>
    </citation>
    <scope>NUCLEOTIDE SEQUENCE [LARGE SCALE MRNA]</scope>
    <source>
        <strain>cv. Columbia</strain>
    </source>
</reference>
<reference key="4">
    <citation type="submission" date="2006-07" db="EMBL/GenBank/DDBJ databases">
        <title>Large-scale analysis of RIKEN Arabidopsis full-length (RAFL) cDNAs.</title>
        <authorList>
            <person name="Totoki Y."/>
            <person name="Seki M."/>
            <person name="Ishida J."/>
            <person name="Nakajima M."/>
            <person name="Enju A."/>
            <person name="Kamiya A."/>
            <person name="Narusaka M."/>
            <person name="Shin-i T."/>
            <person name="Nakagawa M."/>
            <person name="Sakamoto N."/>
            <person name="Oishi K."/>
            <person name="Kohara Y."/>
            <person name="Kobayashi M."/>
            <person name="Toyoda A."/>
            <person name="Sakaki Y."/>
            <person name="Sakurai T."/>
            <person name="Iida K."/>
            <person name="Akiyama K."/>
            <person name="Satou M."/>
            <person name="Toyoda T."/>
            <person name="Konagaya A."/>
            <person name="Carninci P."/>
            <person name="Kawai J."/>
            <person name="Hayashizaki Y."/>
            <person name="Shinozaki K."/>
        </authorList>
    </citation>
    <scope>NUCLEOTIDE SEQUENCE [LARGE SCALE MRNA]</scope>
    <source>
        <strain>cv. Columbia</strain>
    </source>
</reference>
<reference key="5">
    <citation type="submission" date="2007-03" db="EMBL/GenBank/DDBJ databases">
        <title>Arabidopsis ORF clones.</title>
        <authorList>
            <person name="Bautista V.R."/>
            <person name="Kim C.J."/>
            <person name="Chen H."/>
            <person name="Wu S.Y."/>
            <person name="De Los Reyes C."/>
            <person name="Ecker J.R."/>
        </authorList>
    </citation>
    <scope>NUCLEOTIDE SEQUENCE [LARGE SCALE MRNA]</scope>
    <source>
        <strain>cv. Columbia</strain>
    </source>
</reference>
<reference key="6">
    <citation type="journal article" date="2002" name="Nucleic Acids Res.">
        <title>Analysis of histone acetyltransferase and histone deacetylase families of Arabidopsis thaliana suggests functional diversification of chromatin modification among multicellular eukaryotes.</title>
        <authorList>
            <person name="Pandey R."/>
            <person name="Mueller A."/>
            <person name="Napoli C.A."/>
            <person name="Selinger D.A."/>
            <person name="Pikaard C.S."/>
            <person name="Richards E.J."/>
            <person name="Bender J."/>
            <person name="Mount D.W."/>
            <person name="Jorgensen R.A."/>
        </authorList>
    </citation>
    <scope>GENE FAMILY</scope>
    <scope>NOMENCLATURE</scope>
</reference>
<protein>
    <recommendedName>
        <fullName>Transcription factor GTE7</fullName>
    </recommendedName>
    <alternativeName>
        <fullName>Bromodomain-containing protein GTE7</fullName>
    </alternativeName>
    <alternativeName>
        <fullName>Protein GLOBAL TRANSCRIPTION FACTOR GROUP E7</fullName>
    </alternativeName>
</protein>
<organism>
    <name type="scientific">Arabidopsis thaliana</name>
    <name type="common">Mouse-ear cress</name>
    <dbReference type="NCBI Taxonomy" id="3702"/>
    <lineage>
        <taxon>Eukaryota</taxon>
        <taxon>Viridiplantae</taxon>
        <taxon>Streptophyta</taxon>
        <taxon>Embryophyta</taxon>
        <taxon>Tracheophyta</taxon>
        <taxon>Spermatophyta</taxon>
        <taxon>Magnoliopsida</taxon>
        <taxon>eudicotyledons</taxon>
        <taxon>Gunneridae</taxon>
        <taxon>Pentapetalae</taxon>
        <taxon>rosids</taxon>
        <taxon>malvids</taxon>
        <taxon>Brassicales</taxon>
        <taxon>Brassicaceae</taxon>
        <taxon>Camelineae</taxon>
        <taxon>Arabidopsis</taxon>
    </lineage>
</organism>
<name>GTE7_ARATH</name>
<feature type="chain" id="PRO_0000406338" description="Transcription factor GTE7">
    <location>
        <begin position="1"/>
        <end position="590"/>
    </location>
</feature>
<feature type="domain" description="Bromo" evidence="1">
    <location>
        <begin position="164"/>
        <end position="270"/>
    </location>
</feature>
<feature type="domain" description="NET" evidence="2">
    <location>
        <begin position="394"/>
        <end position="475"/>
    </location>
</feature>
<feature type="region of interest" description="Disordered" evidence="3">
    <location>
        <begin position="125"/>
        <end position="160"/>
    </location>
</feature>
<feature type="region of interest" description="Disordered" evidence="3">
    <location>
        <begin position="282"/>
        <end position="400"/>
    </location>
</feature>
<feature type="region of interest" description="Disordered" evidence="3">
    <location>
        <begin position="476"/>
        <end position="590"/>
    </location>
</feature>
<feature type="compositionally biased region" description="Basic and acidic residues" evidence="3">
    <location>
        <begin position="288"/>
        <end position="298"/>
    </location>
</feature>
<feature type="compositionally biased region" description="Pro residues" evidence="3">
    <location>
        <begin position="347"/>
        <end position="369"/>
    </location>
</feature>
<feature type="compositionally biased region" description="Basic and acidic residues" evidence="3">
    <location>
        <begin position="498"/>
        <end position="508"/>
    </location>
</feature>
<feature type="compositionally biased region" description="Acidic residues" evidence="3">
    <location>
        <begin position="509"/>
        <end position="521"/>
    </location>
</feature>
<feature type="compositionally biased region" description="Low complexity" evidence="3">
    <location>
        <begin position="537"/>
        <end position="562"/>
    </location>
</feature>
<gene>
    <name type="primary">GTE7</name>
    <name type="ordered locus">At5g65630</name>
    <name type="ORF">K21L13.15</name>
</gene>
<dbReference type="EMBL" id="AB026639">
    <property type="protein sequence ID" value="BAA98182.1"/>
    <property type="status" value="ALT_SEQ"/>
    <property type="molecule type" value="Genomic_DNA"/>
</dbReference>
<dbReference type="EMBL" id="CP002688">
    <property type="protein sequence ID" value="AED98079.1"/>
    <property type="molecule type" value="Genomic_DNA"/>
</dbReference>
<dbReference type="EMBL" id="BT008626">
    <property type="protein sequence ID" value="AAP40447.1"/>
    <property type="molecule type" value="mRNA"/>
</dbReference>
<dbReference type="EMBL" id="BT030368">
    <property type="protein sequence ID" value="ABO38781.1"/>
    <property type="molecule type" value="mRNA"/>
</dbReference>
<dbReference type="EMBL" id="AK226877">
    <property type="protein sequence ID" value="BAE98957.1"/>
    <property type="molecule type" value="mRNA"/>
</dbReference>
<dbReference type="RefSeq" id="NP_201366.3">
    <property type="nucleotide sequence ID" value="NM_125961.4"/>
</dbReference>
<dbReference type="SMR" id="Q7Y214"/>
<dbReference type="BioGRID" id="21931">
    <property type="interactions" value="1"/>
</dbReference>
<dbReference type="FunCoup" id="Q7Y214">
    <property type="interactions" value="2071"/>
</dbReference>
<dbReference type="IntAct" id="Q7Y214">
    <property type="interactions" value="1"/>
</dbReference>
<dbReference type="STRING" id="3702.Q7Y214"/>
<dbReference type="iPTMnet" id="Q7Y214"/>
<dbReference type="PaxDb" id="3702-AT5G65630.1"/>
<dbReference type="ProteomicsDB" id="247142"/>
<dbReference type="EnsemblPlants" id="AT5G65630.1">
    <property type="protein sequence ID" value="AT5G65630.1"/>
    <property type="gene ID" value="AT5G65630"/>
</dbReference>
<dbReference type="GeneID" id="836689"/>
<dbReference type="Gramene" id="AT5G65630.1">
    <property type="protein sequence ID" value="AT5G65630.1"/>
    <property type="gene ID" value="AT5G65630"/>
</dbReference>
<dbReference type="KEGG" id="ath:AT5G65630"/>
<dbReference type="Araport" id="AT5G65630"/>
<dbReference type="TAIR" id="AT5G65630">
    <property type="gene designation" value="GTE7"/>
</dbReference>
<dbReference type="eggNOG" id="KOG1474">
    <property type="taxonomic scope" value="Eukaryota"/>
</dbReference>
<dbReference type="HOGENOM" id="CLU_009580_3_0_1"/>
<dbReference type="InParanoid" id="Q7Y214"/>
<dbReference type="OMA" id="LNTCGQM"/>
<dbReference type="PhylomeDB" id="Q7Y214"/>
<dbReference type="PRO" id="PR:Q7Y214"/>
<dbReference type="Proteomes" id="UP000006548">
    <property type="component" value="Chromosome 5"/>
</dbReference>
<dbReference type="ExpressionAtlas" id="Q7Y214">
    <property type="expression patterns" value="baseline and differential"/>
</dbReference>
<dbReference type="GO" id="GO:0005634">
    <property type="term" value="C:nucleus"/>
    <property type="evidence" value="ECO:0007669"/>
    <property type="project" value="UniProtKB-SubCell"/>
</dbReference>
<dbReference type="GO" id="GO:0009294">
    <property type="term" value="P:DNA-mediated transformation"/>
    <property type="evidence" value="ECO:0000315"/>
    <property type="project" value="TAIR"/>
</dbReference>
<dbReference type="CDD" id="cd05506">
    <property type="entry name" value="Bromo_plant1"/>
    <property type="match status" value="1"/>
</dbReference>
<dbReference type="FunFam" id="1.20.1270.220:FF:000002">
    <property type="entry name" value="Transcription factor GTE4"/>
    <property type="match status" value="1"/>
</dbReference>
<dbReference type="Gene3D" id="1.20.1270.220">
    <property type="match status" value="1"/>
</dbReference>
<dbReference type="Gene3D" id="1.20.920.10">
    <property type="entry name" value="Bromodomain-like"/>
    <property type="match status" value="1"/>
</dbReference>
<dbReference type="InterPro" id="IPR001487">
    <property type="entry name" value="Bromodomain"/>
</dbReference>
<dbReference type="InterPro" id="IPR036427">
    <property type="entry name" value="Bromodomain-like_sf"/>
</dbReference>
<dbReference type="InterPro" id="IPR037377">
    <property type="entry name" value="GTE_bromo"/>
</dbReference>
<dbReference type="InterPro" id="IPR027353">
    <property type="entry name" value="NET_dom"/>
</dbReference>
<dbReference type="InterPro" id="IPR038336">
    <property type="entry name" value="NET_sf"/>
</dbReference>
<dbReference type="PANTHER" id="PTHR45926">
    <property type="entry name" value="OSJNBA0053K19.4 PROTEIN"/>
    <property type="match status" value="1"/>
</dbReference>
<dbReference type="Pfam" id="PF17035">
    <property type="entry name" value="BET"/>
    <property type="match status" value="1"/>
</dbReference>
<dbReference type="Pfam" id="PF00439">
    <property type="entry name" value="Bromodomain"/>
    <property type="match status" value="1"/>
</dbReference>
<dbReference type="PRINTS" id="PR00503">
    <property type="entry name" value="BROMODOMAIN"/>
</dbReference>
<dbReference type="SMART" id="SM00297">
    <property type="entry name" value="BROMO"/>
    <property type="match status" value="1"/>
</dbReference>
<dbReference type="SUPFAM" id="SSF47370">
    <property type="entry name" value="Bromodomain"/>
    <property type="match status" value="1"/>
</dbReference>
<dbReference type="PROSITE" id="PS50014">
    <property type="entry name" value="BROMODOMAIN_2"/>
    <property type="match status" value="1"/>
</dbReference>
<dbReference type="PROSITE" id="PS51525">
    <property type="entry name" value="NET"/>
    <property type="match status" value="1"/>
</dbReference>
<comment type="subcellular location">
    <subcellularLocation>
        <location evidence="4">Nucleus</location>
    </subcellularLocation>
</comment>
<comment type="domain">
    <text>The NET domain could serve as an interface to localize different proteins or complexes to chromatin.</text>
</comment>
<comment type="sequence caution" evidence="4">
    <conflict type="erroneous gene model prediction">
        <sequence resource="EMBL-CDS" id="BAA98182"/>
    </conflict>
</comment>
<evidence type="ECO:0000255" key="1">
    <source>
        <dbReference type="PROSITE-ProRule" id="PRU00035"/>
    </source>
</evidence>
<evidence type="ECO:0000255" key="2">
    <source>
        <dbReference type="PROSITE-ProRule" id="PRU00857"/>
    </source>
</evidence>
<evidence type="ECO:0000256" key="3">
    <source>
        <dbReference type="SAM" id="MobiDB-lite"/>
    </source>
</evidence>
<evidence type="ECO:0000305" key="4"/>
<proteinExistence type="evidence at transcript level"/>
<sequence>MAPAVFATLNEPSYQEQCGAVFMRKFTNQSVTENTNNLPLFNPNPNPNFERSNSSKQCDDSSEFGSYATFNLAGYTSSQLRELKKRFTSELKQIRILRERIESGTFETQQGYTIPEVPAVRSAPLNNFTGEKNDLGPKKKKQKKNVSGLKRSNQFGPSDPESEKLLAGMLNTCSQILVKLMKHKWAWVFNTPVDVVGLGLHDYHQVVKKPMDLGTVKLNLDKGFYVSPIDFATDVRLTFDNAMTYNPKGQDVYFMADKLLDHFDGMFNPAFKKFEAQQLKLTGSSSRPEPDFKPDFKQRQWNQNPPMVANPRKGTEQISIAKKLDSVKPPQPTLPPQLVEPSRVQSPSPPPPPPVIQPELPQPQPPPPQLEIEVEAPPDVSEVSKGRKGKLPKPKAKDPNKRLMTMEEKSKLGMNLQDLPPEKLGQLLQILRKRNGHLAQDGDEIELDIEAVDNETLWELDRFVTNYKKMASKIKRQGFIRNVSTPPRNMASVAEMGSAEKRTRRGDAGEEDVDIGEDIPIEDYPSVEIERDGTAVAAAASSGSSSSGSSSSSGGSSSSSDSGSGGSSSGSDSDADSVQSPFVEAKEAQC</sequence>
<accession>Q7Y214</accession>
<accession>Q9LSL2</accession>